<dbReference type="EMBL" id="CP000350">
    <property type="protein sequence ID" value="ABJ75566.1"/>
    <property type="molecule type" value="Genomic_DNA"/>
</dbReference>
<dbReference type="RefSeq" id="WP_002726297.1">
    <property type="nucleotide sequence ID" value="NC_008510.1"/>
</dbReference>
<dbReference type="SMR" id="Q04U54"/>
<dbReference type="GeneID" id="61174780"/>
<dbReference type="KEGG" id="lbj:LBJ_0922"/>
<dbReference type="HOGENOM" id="CLU_123265_0_1_12"/>
<dbReference type="Proteomes" id="UP000000656">
    <property type="component" value="Chromosome 1"/>
</dbReference>
<dbReference type="GO" id="GO:1990904">
    <property type="term" value="C:ribonucleoprotein complex"/>
    <property type="evidence" value="ECO:0007669"/>
    <property type="project" value="UniProtKB-KW"/>
</dbReference>
<dbReference type="GO" id="GO:0005840">
    <property type="term" value="C:ribosome"/>
    <property type="evidence" value="ECO:0007669"/>
    <property type="project" value="UniProtKB-KW"/>
</dbReference>
<dbReference type="GO" id="GO:0019843">
    <property type="term" value="F:rRNA binding"/>
    <property type="evidence" value="ECO:0007669"/>
    <property type="project" value="UniProtKB-UniRule"/>
</dbReference>
<dbReference type="GO" id="GO:0003735">
    <property type="term" value="F:structural constituent of ribosome"/>
    <property type="evidence" value="ECO:0007669"/>
    <property type="project" value="InterPro"/>
</dbReference>
<dbReference type="GO" id="GO:0000027">
    <property type="term" value="P:ribosomal large subunit assembly"/>
    <property type="evidence" value="ECO:0007669"/>
    <property type="project" value="UniProtKB-UniRule"/>
</dbReference>
<dbReference type="GO" id="GO:0006412">
    <property type="term" value="P:translation"/>
    <property type="evidence" value="ECO:0007669"/>
    <property type="project" value="InterPro"/>
</dbReference>
<dbReference type="CDD" id="cd07026">
    <property type="entry name" value="Ribosomal_L20"/>
    <property type="match status" value="1"/>
</dbReference>
<dbReference type="FunFam" id="1.10.1900.20:FF:000001">
    <property type="entry name" value="50S ribosomal protein L20"/>
    <property type="match status" value="1"/>
</dbReference>
<dbReference type="Gene3D" id="6.10.160.10">
    <property type="match status" value="1"/>
</dbReference>
<dbReference type="Gene3D" id="1.10.1900.20">
    <property type="entry name" value="Ribosomal protein L20"/>
    <property type="match status" value="1"/>
</dbReference>
<dbReference type="HAMAP" id="MF_00382">
    <property type="entry name" value="Ribosomal_bL20"/>
    <property type="match status" value="1"/>
</dbReference>
<dbReference type="InterPro" id="IPR005813">
    <property type="entry name" value="Ribosomal_bL20"/>
</dbReference>
<dbReference type="InterPro" id="IPR049946">
    <property type="entry name" value="RIBOSOMAL_L20_CS"/>
</dbReference>
<dbReference type="InterPro" id="IPR035566">
    <property type="entry name" value="Ribosomal_protein_bL20_C"/>
</dbReference>
<dbReference type="NCBIfam" id="TIGR01032">
    <property type="entry name" value="rplT_bact"/>
    <property type="match status" value="1"/>
</dbReference>
<dbReference type="PANTHER" id="PTHR10986">
    <property type="entry name" value="39S RIBOSOMAL PROTEIN L20"/>
    <property type="match status" value="1"/>
</dbReference>
<dbReference type="Pfam" id="PF00453">
    <property type="entry name" value="Ribosomal_L20"/>
    <property type="match status" value="1"/>
</dbReference>
<dbReference type="PRINTS" id="PR00062">
    <property type="entry name" value="RIBOSOMALL20"/>
</dbReference>
<dbReference type="SUPFAM" id="SSF74731">
    <property type="entry name" value="Ribosomal protein L20"/>
    <property type="match status" value="1"/>
</dbReference>
<dbReference type="PROSITE" id="PS00937">
    <property type="entry name" value="RIBOSOMAL_L20"/>
    <property type="match status" value="1"/>
</dbReference>
<feature type="chain" id="PRO_1000049003" description="Large ribosomal subunit protein bL20">
    <location>
        <begin position="1"/>
        <end position="117"/>
    </location>
</feature>
<organism>
    <name type="scientific">Leptospira borgpetersenii serovar Hardjo-bovis (strain JB197)</name>
    <dbReference type="NCBI Taxonomy" id="355277"/>
    <lineage>
        <taxon>Bacteria</taxon>
        <taxon>Pseudomonadati</taxon>
        <taxon>Spirochaetota</taxon>
        <taxon>Spirochaetia</taxon>
        <taxon>Leptospirales</taxon>
        <taxon>Leptospiraceae</taxon>
        <taxon>Leptospira</taxon>
    </lineage>
</organism>
<protein>
    <recommendedName>
        <fullName evidence="1">Large ribosomal subunit protein bL20</fullName>
    </recommendedName>
    <alternativeName>
        <fullName evidence="2">50S ribosomal protein L20</fullName>
    </alternativeName>
</protein>
<reference key="1">
    <citation type="journal article" date="2006" name="Proc. Natl. Acad. Sci. U.S.A.">
        <title>Genome reduction in Leptospira borgpetersenii reflects limited transmission potential.</title>
        <authorList>
            <person name="Bulach D.M."/>
            <person name="Zuerner R.L."/>
            <person name="Wilson P."/>
            <person name="Seemann T."/>
            <person name="McGrath A."/>
            <person name="Cullen P.A."/>
            <person name="Davis J."/>
            <person name="Johnson M."/>
            <person name="Kuczek E."/>
            <person name="Alt D.P."/>
            <person name="Peterson-Burch B."/>
            <person name="Coppel R.L."/>
            <person name="Rood J.I."/>
            <person name="Davies J.K."/>
            <person name="Adler B."/>
        </authorList>
    </citation>
    <scope>NUCLEOTIDE SEQUENCE [LARGE SCALE GENOMIC DNA]</scope>
    <source>
        <strain>JB197</strain>
    </source>
</reference>
<keyword id="KW-0687">Ribonucleoprotein</keyword>
<keyword id="KW-0689">Ribosomal protein</keyword>
<keyword id="KW-0694">RNA-binding</keyword>
<keyword id="KW-0699">rRNA-binding</keyword>
<sequence>MPRAVNGTIHKNRRRRVLKDAKGFRGARSKLYRTAKSAVMKAGQWAYRDRRAKKRDFRKLWIIRINAAARENGLSYSVFMNSLKKLGINMDRKSLAELAFNDREVFNALVEKIKVAG</sequence>
<evidence type="ECO:0000255" key="1">
    <source>
        <dbReference type="HAMAP-Rule" id="MF_00382"/>
    </source>
</evidence>
<evidence type="ECO:0000305" key="2"/>
<gene>
    <name evidence="1" type="primary">rplT</name>
    <name type="ordered locus">LBJ_0922</name>
</gene>
<name>RL20_LEPBJ</name>
<accession>Q04U54</accession>
<proteinExistence type="inferred from homology"/>
<comment type="function">
    <text evidence="1">Binds directly to 23S ribosomal RNA and is necessary for the in vitro assembly process of the 50S ribosomal subunit. It is not involved in the protein synthesizing functions of that subunit.</text>
</comment>
<comment type="similarity">
    <text evidence="1">Belongs to the bacterial ribosomal protein bL20 family.</text>
</comment>